<sequence>MKSQNNKEYKSEFSYKETLNLLKTDFSMRANSVLREPEIQNFWAKNNIDFELGSNNSGKIFTLHDGPPYANGALHMGHALNKVLKDIINKYKTLRGFRVHYVPGWDCHGLPIELKVLQNLKSSERKNLDTLNLRKKATDYAYVQINNQMEGFKRWGIWGNWDNPYLTLKKSYESAQIGVFGKMFLNGYIYRGLKPVHWSPSSRTALAEAELEYPDEHYSKSIYVSLKITKLSDEILLKFYQENPNFKKDFFLSNSFITIWTTTPWTIPANEAVAVNPKINYVFAIDEEKRIYLLAKELSSEISNKFNKDLTTLLEVKGVTLEDIEYQHPTKNKNCRIVIGGDYITIESGTGIVHTAPGHGIDDFNVGRKYDLPTTCVVDEKGNLNEYSGQFQGSNVLKDANDLIIDYLEEKDLLLLQENYKHRYPYDWRTKKPTIFRATEQWFASVNGFRSSALKAIEDVEWIPATGKKRIYSMVVGRGDWCISRQRSWGLPIPVFYKKNGNEILLNSEIINHIQKLFSEHGADIWWDWDVKHLLPDNYVKESDLWKKGTDTMDVWFDSGSSWAAVCEQRSELKYPADLYLEGSDQHRGWFQSSLLTSVAVNNKPPYKKVLTHGFALDENGRKMSKSLGNVVDPNIIINGGNNKKIEPAYGADVLRLWVSSVDYSVDVPIGSNILKQLSDVYRKVRNTARYLLGNIHDYDPNIDSFEIDQLPLLDQWMLGRLVEVTDQISNAYENYEFSKFFQILQSFCVVDLSNFYLDIAKDRLYVSSKSQFRRRSCQFVMSKVVENLAVLISPVLCHMAEDIWQNVPYSTKEKSVFQRGWPNFSQSWKNEILNEHIANLRNLRVEINKAIEGCRNKQIIGAALETEVNYLPKDKVVKDSLTWLKKFGNEEVDLFRDWLIVSNFQVVSELAKNSLIIDNNEIGKIQILKAHGQKCDRCWHYQEEIFSGIQNTKLCKRCSHIINLEFT</sequence>
<organism>
    <name type="scientific">Prochlorococcus marinus (strain MIT 9312)</name>
    <dbReference type="NCBI Taxonomy" id="74546"/>
    <lineage>
        <taxon>Bacteria</taxon>
        <taxon>Bacillati</taxon>
        <taxon>Cyanobacteriota</taxon>
        <taxon>Cyanophyceae</taxon>
        <taxon>Synechococcales</taxon>
        <taxon>Prochlorococcaceae</taxon>
        <taxon>Prochlorococcus</taxon>
    </lineage>
</organism>
<reference key="1">
    <citation type="journal article" date="2006" name="Science">
        <title>Genomic islands and the ecology and evolution of Prochlorococcus.</title>
        <authorList>
            <person name="Coleman M.L."/>
            <person name="Sullivan M.B."/>
            <person name="Martiny A.C."/>
            <person name="Steglich C."/>
            <person name="Barry K."/>
            <person name="Delong E.F."/>
            <person name="Chisholm S.W."/>
        </authorList>
    </citation>
    <scope>NUCLEOTIDE SEQUENCE [LARGE SCALE GENOMIC DNA]</scope>
    <source>
        <strain>MIT 9312</strain>
    </source>
</reference>
<accession>Q31CU4</accession>
<gene>
    <name evidence="1" type="primary">ileS</name>
    <name type="ordered locus">PMT9312_0240</name>
</gene>
<comment type="function">
    <text evidence="1">Catalyzes the attachment of isoleucine to tRNA(Ile). As IleRS can inadvertently accommodate and process structurally similar amino acids such as valine, to avoid such errors it has two additional distinct tRNA(Ile)-dependent editing activities. One activity is designated as 'pretransfer' editing and involves the hydrolysis of activated Val-AMP. The other activity is designated 'posttransfer' editing and involves deacylation of mischarged Val-tRNA(Ile).</text>
</comment>
<comment type="catalytic activity">
    <reaction evidence="1">
        <text>tRNA(Ile) + L-isoleucine + ATP = L-isoleucyl-tRNA(Ile) + AMP + diphosphate</text>
        <dbReference type="Rhea" id="RHEA:11060"/>
        <dbReference type="Rhea" id="RHEA-COMP:9666"/>
        <dbReference type="Rhea" id="RHEA-COMP:9695"/>
        <dbReference type="ChEBI" id="CHEBI:30616"/>
        <dbReference type="ChEBI" id="CHEBI:33019"/>
        <dbReference type="ChEBI" id="CHEBI:58045"/>
        <dbReference type="ChEBI" id="CHEBI:78442"/>
        <dbReference type="ChEBI" id="CHEBI:78528"/>
        <dbReference type="ChEBI" id="CHEBI:456215"/>
        <dbReference type="EC" id="6.1.1.5"/>
    </reaction>
</comment>
<comment type="cofactor">
    <cofactor evidence="1">
        <name>Zn(2+)</name>
        <dbReference type="ChEBI" id="CHEBI:29105"/>
    </cofactor>
    <text evidence="1">Binds 1 zinc ion per subunit.</text>
</comment>
<comment type="subunit">
    <text evidence="1">Monomer.</text>
</comment>
<comment type="subcellular location">
    <subcellularLocation>
        <location evidence="1">Cytoplasm</location>
    </subcellularLocation>
</comment>
<comment type="domain">
    <text evidence="1">IleRS has two distinct active sites: one for aminoacylation and one for editing. The misactivated valine is translocated from the active site to the editing site, which sterically excludes the correctly activated isoleucine. The single editing site contains two valyl binding pockets, one specific for each substrate (Val-AMP or Val-tRNA(Ile)).</text>
</comment>
<comment type="similarity">
    <text evidence="1">Belongs to the class-I aminoacyl-tRNA synthetase family. IleS type 1 subfamily.</text>
</comment>
<keyword id="KW-0030">Aminoacyl-tRNA synthetase</keyword>
<keyword id="KW-0067">ATP-binding</keyword>
<keyword id="KW-0963">Cytoplasm</keyword>
<keyword id="KW-0436">Ligase</keyword>
<keyword id="KW-0479">Metal-binding</keyword>
<keyword id="KW-0547">Nucleotide-binding</keyword>
<keyword id="KW-0648">Protein biosynthesis</keyword>
<keyword id="KW-0862">Zinc</keyword>
<protein>
    <recommendedName>
        <fullName evidence="1">Isoleucine--tRNA ligase</fullName>
        <ecNumber evidence="1">6.1.1.5</ecNumber>
    </recommendedName>
    <alternativeName>
        <fullName evidence="1">Isoleucyl-tRNA synthetase</fullName>
        <shortName evidence="1">IleRS</shortName>
    </alternativeName>
</protein>
<dbReference type="EC" id="6.1.1.5" evidence="1"/>
<dbReference type="EMBL" id="CP000111">
    <property type="protein sequence ID" value="ABB49301.1"/>
    <property type="molecule type" value="Genomic_DNA"/>
</dbReference>
<dbReference type="RefSeq" id="WP_011375805.1">
    <property type="nucleotide sequence ID" value="NC_007577.1"/>
</dbReference>
<dbReference type="SMR" id="Q31CU4"/>
<dbReference type="STRING" id="74546.PMT9312_0240"/>
<dbReference type="KEGG" id="pmi:PMT9312_0240"/>
<dbReference type="eggNOG" id="COG0060">
    <property type="taxonomic scope" value="Bacteria"/>
</dbReference>
<dbReference type="HOGENOM" id="CLU_001493_7_0_3"/>
<dbReference type="OrthoDB" id="9810365at2"/>
<dbReference type="Proteomes" id="UP000002715">
    <property type="component" value="Chromosome"/>
</dbReference>
<dbReference type="GO" id="GO:0005737">
    <property type="term" value="C:cytoplasm"/>
    <property type="evidence" value="ECO:0007669"/>
    <property type="project" value="UniProtKB-SubCell"/>
</dbReference>
<dbReference type="GO" id="GO:0002161">
    <property type="term" value="F:aminoacyl-tRNA deacylase activity"/>
    <property type="evidence" value="ECO:0007669"/>
    <property type="project" value="InterPro"/>
</dbReference>
<dbReference type="GO" id="GO:0005524">
    <property type="term" value="F:ATP binding"/>
    <property type="evidence" value="ECO:0007669"/>
    <property type="project" value="UniProtKB-UniRule"/>
</dbReference>
<dbReference type="GO" id="GO:0004822">
    <property type="term" value="F:isoleucine-tRNA ligase activity"/>
    <property type="evidence" value="ECO:0007669"/>
    <property type="project" value="UniProtKB-UniRule"/>
</dbReference>
<dbReference type="GO" id="GO:0000049">
    <property type="term" value="F:tRNA binding"/>
    <property type="evidence" value="ECO:0007669"/>
    <property type="project" value="InterPro"/>
</dbReference>
<dbReference type="GO" id="GO:0008270">
    <property type="term" value="F:zinc ion binding"/>
    <property type="evidence" value="ECO:0007669"/>
    <property type="project" value="UniProtKB-UniRule"/>
</dbReference>
<dbReference type="GO" id="GO:0006428">
    <property type="term" value="P:isoleucyl-tRNA aminoacylation"/>
    <property type="evidence" value="ECO:0007669"/>
    <property type="project" value="UniProtKB-UniRule"/>
</dbReference>
<dbReference type="CDD" id="cd07960">
    <property type="entry name" value="Anticodon_Ia_Ile_BEm"/>
    <property type="match status" value="1"/>
</dbReference>
<dbReference type="CDD" id="cd00818">
    <property type="entry name" value="IleRS_core"/>
    <property type="match status" value="1"/>
</dbReference>
<dbReference type="FunFam" id="3.40.50.620:FF:000111">
    <property type="entry name" value="Mitochondrial isoleucyl-tRNA synthetase"/>
    <property type="match status" value="1"/>
</dbReference>
<dbReference type="Gene3D" id="1.10.730.20">
    <property type="match status" value="1"/>
</dbReference>
<dbReference type="Gene3D" id="3.40.50.620">
    <property type="entry name" value="HUPs"/>
    <property type="match status" value="2"/>
</dbReference>
<dbReference type="Gene3D" id="3.90.740.10">
    <property type="entry name" value="Valyl/Leucyl/Isoleucyl-tRNA synthetase, editing domain"/>
    <property type="match status" value="1"/>
</dbReference>
<dbReference type="HAMAP" id="MF_02002">
    <property type="entry name" value="Ile_tRNA_synth_type1"/>
    <property type="match status" value="1"/>
</dbReference>
<dbReference type="InterPro" id="IPR001412">
    <property type="entry name" value="aa-tRNA-synth_I_CS"/>
</dbReference>
<dbReference type="InterPro" id="IPR002300">
    <property type="entry name" value="aa-tRNA-synth_Ia"/>
</dbReference>
<dbReference type="InterPro" id="IPR033708">
    <property type="entry name" value="Anticodon_Ile_BEm"/>
</dbReference>
<dbReference type="InterPro" id="IPR002301">
    <property type="entry name" value="Ile-tRNA-ligase"/>
</dbReference>
<dbReference type="InterPro" id="IPR023585">
    <property type="entry name" value="Ile-tRNA-ligase_type1"/>
</dbReference>
<dbReference type="InterPro" id="IPR050081">
    <property type="entry name" value="Ile-tRNA_ligase"/>
</dbReference>
<dbReference type="InterPro" id="IPR013155">
    <property type="entry name" value="M/V/L/I-tRNA-synth_anticd-bd"/>
</dbReference>
<dbReference type="InterPro" id="IPR014729">
    <property type="entry name" value="Rossmann-like_a/b/a_fold"/>
</dbReference>
<dbReference type="InterPro" id="IPR009080">
    <property type="entry name" value="tRNAsynth_Ia_anticodon-bd"/>
</dbReference>
<dbReference type="InterPro" id="IPR009008">
    <property type="entry name" value="Val/Leu/Ile-tRNA-synth_edit"/>
</dbReference>
<dbReference type="InterPro" id="IPR010663">
    <property type="entry name" value="Znf_FPG/IleRS"/>
</dbReference>
<dbReference type="NCBIfam" id="TIGR00392">
    <property type="entry name" value="ileS"/>
    <property type="match status" value="1"/>
</dbReference>
<dbReference type="PANTHER" id="PTHR42765:SF1">
    <property type="entry name" value="ISOLEUCINE--TRNA LIGASE, MITOCHONDRIAL"/>
    <property type="match status" value="1"/>
</dbReference>
<dbReference type="PANTHER" id="PTHR42765">
    <property type="entry name" value="SOLEUCYL-TRNA SYNTHETASE"/>
    <property type="match status" value="1"/>
</dbReference>
<dbReference type="Pfam" id="PF08264">
    <property type="entry name" value="Anticodon_1"/>
    <property type="match status" value="1"/>
</dbReference>
<dbReference type="Pfam" id="PF00133">
    <property type="entry name" value="tRNA-synt_1"/>
    <property type="match status" value="1"/>
</dbReference>
<dbReference type="Pfam" id="PF06827">
    <property type="entry name" value="zf-FPG_IleRS"/>
    <property type="match status" value="1"/>
</dbReference>
<dbReference type="PRINTS" id="PR00984">
    <property type="entry name" value="TRNASYNTHILE"/>
</dbReference>
<dbReference type="SUPFAM" id="SSF47323">
    <property type="entry name" value="Anticodon-binding domain of a subclass of class I aminoacyl-tRNA synthetases"/>
    <property type="match status" value="1"/>
</dbReference>
<dbReference type="SUPFAM" id="SSF52374">
    <property type="entry name" value="Nucleotidylyl transferase"/>
    <property type="match status" value="1"/>
</dbReference>
<dbReference type="SUPFAM" id="SSF50677">
    <property type="entry name" value="ValRS/IleRS/LeuRS editing domain"/>
    <property type="match status" value="1"/>
</dbReference>
<dbReference type="PROSITE" id="PS00178">
    <property type="entry name" value="AA_TRNA_LIGASE_I"/>
    <property type="match status" value="1"/>
</dbReference>
<name>SYI_PROM9</name>
<feature type="chain" id="PRO_1000022100" description="Isoleucine--tRNA ligase">
    <location>
        <begin position="1"/>
        <end position="968"/>
    </location>
</feature>
<feature type="short sequence motif" description="'HIGH' region">
    <location>
        <begin position="68"/>
        <end position="78"/>
    </location>
</feature>
<feature type="short sequence motif" description="'KMSKS' region">
    <location>
        <begin position="623"/>
        <end position="627"/>
    </location>
</feature>
<feature type="binding site" evidence="1">
    <location>
        <position position="582"/>
    </location>
    <ligand>
        <name>L-isoleucyl-5'-AMP</name>
        <dbReference type="ChEBI" id="CHEBI:178002"/>
    </ligand>
</feature>
<feature type="binding site" evidence="1">
    <location>
        <position position="626"/>
    </location>
    <ligand>
        <name>ATP</name>
        <dbReference type="ChEBI" id="CHEBI:30616"/>
    </ligand>
</feature>
<feature type="binding site" evidence="1">
    <location>
        <position position="936"/>
    </location>
    <ligand>
        <name>Zn(2+)</name>
        <dbReference type="ChEBI" id="CHEBI:29105"/>
    </ligand>
</feature>
<feature type="binding site" evidence="1">
    <location>
        <position position="939"/>
    </location>
    <ligand>
        <name>Zn(2+)</name>
        <dbReference type="ChEBI" id="CHEBI:29105"/>
    </ligand>
</feature>
<feature type="binding site" evidence="1">
    <location>
        <position position="956"/>
    </location>
    <ligand>
        <name>Zn(2+)</name>
        <dbReference type="ChEBI" id="CHEBI:29105"/>
    </ligand>
</feature>
<feature type="binding site" evidence="1">
    <location>
        <position position="959"/>
    </location>
    <ligand>
        <name>Zn(2+)</name>
        <dbReference type="ChEBI" id="CHEBI:29105"/>
    </ligand>
</feature>
<proteinExistence type="inferred from homology"/>
<evidence type="ECO:0000255" key="1">
    <source>
        <dbReference type="HAMAP-Rule" id="MF_02002"/>
    </source>
</evidence>